<keyword id="KW-0066">ATP synthesis</keyword>
<keyword id="KW-0067">ATP-binding</keyword>
<keyword id="KW-0375">Hydrogen ion transport</keyword>
<keyword id="KW-0406">Ion transport</keyword>
<keyword id="KW-0547">Nucleotide-binding</keyword>
<keyword id="KW-1278">Translocase</keyword>
<keyword id="KW-0813">Transport</keyword>
<reference key="1">
    <citation type="journal article" date="2007" name="PLoS ONE">
        <title>Analysis of the neurotoxin complex genes in Clostridium botulinum A1-A4 and B1 strains: BoNT/A3, /Ba4 and /B1 clusters are located within plasmids.</title>
        <authorList>
            <person name="Smith T.J."/>
            <person name="Hill K.K."/>
            <person name="Foley B.T."/>
            <person name="Detter J.C."/>
            <person name="Munk A.C."/>
            <person name="Bruce D.C."/>
            <person name="Doggett N.A."/>
            <person name="Smith L.A."/>
            <person name="Marks J.D."/>
            <person name="Xie G."/>
            <person name="Brettin T.S."/>
        </authorList>
    </citation>
    <scope>NUCLEOTIDE SEQUENCE [LARGE SCALE GENOMIC DNA]</scope>
    <source>
        <strain>Okra / Type B1</strain>
    </source>
</reference>
<name>VATA_CLOBK</name>
<organism>
    <name type="scientific">Clostridium botulinum (strain Okra / Type B1)</name>
    <dbReference type="NCBI Taxonomy" id="498213"/>
    <lineage>
        <taxon>Bacteria</taxon>
        <taxon>Bacillati</taxon>
        <taxon>Bacillota</taxon>
        <taxon>Clostridia</taxon>
        <taxon>Eubacteriales</taxon>
        <taxon>Clostridiaceae</taxon>
        <taxon>Clostridium</taxon>
    </lineage>
</organism>
<evidence type="ECO:0000255" key="1">
    <source>
        <dbReference type="HAMAP-Rule" id="MF_00309"/>
    </source>
</evidence>
<protein>
    <recommendedName>
        <fullName evidence="1">V-type ATP synthase alpha chain</fullName>
        <ecNumber evidence="1">7.1.2.2</ecNumber>
    </recommendedName>
    <alternativeName>
        <fullName evidence="1">V-ATPase subunit A</fullName>
    </alternativeName>
</protein>
<proteinExistence type="inferred from homology"/>
<comment type="function">
    <text evidence="1">Produces ATP from ADP in the presence of a proton gradient across the membrane. The V-type alpha chain is a catalytic subunit.</text>
</comment>
<comment type="catalytic activity">
    <reaction evidence="1">
        <text>ATP + H2O + 4 H(+)(in) = ADP + phosphate + 5 H(+)(out)</text>
        <dbReference type="Rhea" id="RHEA:57720"/>
        <dbReference type="ChEBI" id="CHEBI:15377"/>
        <dbReference type="ChEBI" id="CHEBI:15378"/>
        <dbReference type="ChEBI" id="CHEBI:30616"/>
        <dbReference type="ChEBI" id="CHEBI:43474"/>
        <dbReference type="ChEBI" id="CHEBI:456216"/>
        <dbReference type="EC" id="7.1.2.2"/>
    </reaction>
</comment>
<comment type="similarity">
    <text evidence="1">Belongs to the ATPase alpha/beta chains family.</text>
</comment>
<gene>
    <name evidence="1" type="primary">atpA</name>
    <name type="ordered locus">CLD_1940</name>
</gene>
<feature type="chain" id="PRO_1000115638" description="V-type ATP synthase alpha chain">
    <location>
        <begin position="1"/>
        <end position="592"/>
    </location>
</feature>
<feature type="binding site" evidence="1">
    <location>
        <begin position="233"/>
        <end position="240"/>
    </location>
    <ligand>
        <name>ATP</name>
        <dbReference type="ChEBI" id="CHEBI:30616"/>
    </ligand>
</feature>
<dbReference type="EC" id="7.1.2.2" evidence="1"/>
<dbReference type="EMBL" id="CP000939">
    <property type="protein sequence ID" value="ACA46699.1"/>
    <property type="molecule type" value="Genomic_DNA"/>
</dbReference>
<dbReference type="SMR" id="B1IJM8"/>
<dbReference type="KEGG" id="cbb:CLD_1940"/>
<dbReference type="HOGENOM" id="CLU_008162_3_1_9"/>
<dbReference type="Proteomes" id="UP000008541">
    <property type="component" value="Chromosome"/>
</dbReference>
<dbReference type="GO" id="GO:0045259">
    <property type="term" value="C:proton-transporting ATP synthase complex"/>
    <property type="evidence" value="ECO:0007669"/>
    <property type="project" value="UniProtKB-ARBA"/>
</dbReference>
<dbReference type="GO" id="GO:0005524">
    <property type="term" value="F:ATP binding"/>
    <property type="evidence" value="ECO:0007669"/>
    <property type="project" value="UniProtKB-UniRule"/>
</dbReference>
<dbReference type="GO" id="GO:0046933">
    <property type="term" value="F:proton-transporting ATP synthase activity, rotational mechanism"/>
    <property type="evidence" value="ECO:0007669"/>
    <property type="project" value="UniProtKB-UniRule"/>
</dbReference>
<dbReference type="GO" id="GO:0046961">
    <property type="term" value="F:proton-transporting ATPase activity, rotational mechanism"/>
    <property type="evidence" value="ECO:0007669"/>
    <property type="project" value="InterPro"/>
</dbReference>
<dbReference type="GO" id="GO:0042777">
    <property type="term" value="P:proton motive force-driven plasma membrane ATP synthesis"/>
    <property type="evidence" value="ECO:0007669"/>
    <property type="project" value="UniProtKB-UniRule"/>
</dbReference>
<dbReference type="CDD" id="cd18111">
    <property type="entry name" value="ATP-synt_V_A-type_alpha_C"/>
    <property type="match status" value="1"/>
</dbReference>
<dbReference type="CDD" id="cd18119">
    <property type="entry name" value="ATP-synt_V_A-type_alpha_N"/>
    <property type="match status" value="1"/>
</dbReference>
<dbReference type="CDD" id="cd01134">
    <property type="entry name" value="V_A-ATPase_A"/>
    <property type="match status" value="1"/>
</dbReference>
<dbReference type="FunFam" id="3.40.50.300:FF:000675">
    <property type="entry name" value="V-type ATP synthase alpha chain"/>
    <property type="match status" value="1"/>
</dbReference>
<dbReference type="FunFam" id="1.10.1140.10:FF:000002">
    <property type="entry name" value="V-type proton ATPase catalytic subunit A"/>
    <property type="match status" value="1"/>
</dbReference>
<dbReference type="FunFam" id="2.40.30.20:FF:000002">
    <property type="entry name" value="V-type proton ATPase catalytic subunit A"/>
    <property type="match status" value="1"/>
</dbReference>
<dbReference type="FunFam" id="2.40.50.100:FF:000008">
    <property type="entry name" value="V-type proton ATPase catalytic subunit A"/>
    <property type="match status" value="1"/>
</dbReference>
<dbReference type="Gene3D" id="2.40.30.20">
    <property type="match status" value="1"/>
</dbReference>
<dbReference type="Gene3D" id="2.40.50.100">
    <property type="match status" value="1"/>
</dbReference>
<dbReference type="Gene3D" id="1.10.1140.10">
    <property type="entry name" value="Bovine Mitochondrial F1-atpase, Atp Synthase Beta Chain, Chain D, domain 3"/>
    <property type="match status" value="1"/>
</dbReference>
<dbReference type="Gene3D" id="3.40.50.300">
    <property type="entry name" value="P-loop containing nucleotide triphosphate hydrolases"/>
    <property type="match status" value="1"/>
</dbReference>
<dbReference type="HAMAP" id="MF_00309">
    <property type="entry name" value="ATP_synth_A_arch"/>
    <property type="match status" value="1"/>
</dbReference>
<dbReference type="InterPro" id="IPR055190">
    <property type="entry name" value="ATP-synt_VA_C"/>
</dbReference>
<dbReference type="InterPro" id="IPR031686">
    <property type="entry name" value="ATP-synth_a_Xtn"/>
</dbReference>
<dbReference type="InterPro" id="IPR023366">
    <property type="entry name" value="ATP_synth_asu-like_sf"/>
</dbReference>
<dbReference type="InterPro" id="IPR020003">
    <property type="entry name" value="ATPase_a/bsu_AS"/>
</dbReference>
<dbReference type="InterPro" id="IPR004100">
    <property type="entry name" value="ATPase_F1/V1/A1_a/bsu_N"/>
</dbReference>
<dbReference type="InterPro" id="IPR036121">
    <property type="entry name" value="ATPase_F1/V1/A1_a/bsu_N_sf"/>
</dbReference>
<dbReference type="InterPro" id="IPR000194">
    <property type="entry name" value="ATPase_F1/V1/A1_a/bsu_nucl-bd"/>
</dbReference>
<dbReference type="InterPro" id="IPR024034">
    <property type="entry name" value="ATPase_F1/V1_b/a_C"/>
</dbReference>
<dbReference type="InterPro" id="IPR027417">
    <property type="entry name" value="P-loop_NTPase"/>
</dbReference>
<dbReference type="InterPro" id="IPR022878">
    <property type="entry name" value="V-ATPase_asu"/>
</dbReference>
<dbReference type="NCBIfam" id="NF003220">
    <property type="entry name" value="PRK04192.1"/>
    <property type="match status" value="1"/>
</dbReference>
<dbReference type="PANTHER" id="PTHR43607:SF1">
    <property type="entry name" value="H(+)-TRANSPORTING TWO-SECTOR ATPASE"/>
    <property type="match status" value="1"/>
</dbReference>
<dbReference type="PANTHER" id="PTHR43607">
    <property type="entry name" value="V-TYPE PROTON ATPASE CATALYTIC SUBUNIT A"/>
    <property type="match status" value="1"/>
</dbReference>
<dbReference type="Pfam" id="PF00006">
    <property type="entry name" value="ATP-synt_ab"/>
    <property type="match status" value="1"/>
</dbReference>
<dbReference type="Pfam" id="PF02874">
    <property type="entry name" value="ATP-synt_ab_N"/>
    <property type="match status" value="1"/>
</dbReference>
<dbReference type="Pfam" id="PF16886">
    <property type="entry name" value="ATP-synt_ab_Xtn"/>
    <property type="match status" value="1"/>
</dbReference>
<dbReference type="Pfam" id="PF22919">
    <property type="entry name" value="ATP-synt_VA_C"/>
    <property type="match status" value="1"/>
</dbReference>
<dbReference type="SUPFAM" id="SSF47917">
    <property type="entry name" value="C-terminal domain of alpha and beta subunits of F1 ATP synthase"/>
    <property type="match status" value="1"/>
</dbReference>
<dbReference type="SUPFAM" id="SSF50615">
    <property type="entry name" value="N-terminal domain of alpha and beta subunits of F1 ATP synthase"/>
    <property type="match status" value="1"/>
</dbReference>
<dbReference type="SUPFAM" id="SSF52540">
    <property type="entry name" value="P-loop containing nucleoside triphosphate hydrolases"/>
    <property type="match status" value="1"/>
</dbReference>
<dbReference type="PROSITE" id="PS00152">
    <property type="entry name" value="ATPASE_ALPHA_BETA"/>
    <property type="match status" value="1"/>
</dbReference>
<sequence>MNLKTGRVLKISGPLVVAEGMEEANIYDVVKVGEKRLIGEIIEMREDRASIQVYEETAGLAPGDPVITTGEPLSVELGPGLIEAMFDGIQRPLNAIKAKAGDFITRGVEVHSLDRDRKWHFTPLKKVGDTVEAGDVIGIVQETSIVEHKIMVPYGIKGTIETIEEGDFTVVDTVAKVKDKDKVSDLIMMQKWPVRRGRPYGRKLNPVEPMITGQRVIDTFFPVTKGGTACVPGPFGSGKTVVQHQLAKWADAQIVVYIGCGERGNEMTDVLNEFPELKDPKTGEPLMKRTVLIANTSNMPVAAREASIYTGITIGEYFRDMGYSVALMADSTSRWAEALREMSGRLEEMPGDEGYPAYLGSRAADFYERAGKVLSLGSEGREGALTVIGAVSPPGGDLSEPVTQATLRIVKVFWGLDSQLAYRRHFPAINWLNSYSLYLEKISPWMDENVASDWTALRTRAMSLLQEEANLEEIVRLVGIDALSEKDRLKLEVAKSLREDYLQQNAFHEVDTYASLEKQYKMLKLVLFFYDETQRALNAGVYLKELLDLEVRDKIARAKYVSEESIENIDAIFNELSEVIDELISKGGIMNA</sequence>
<accession>B1IJM8</accession>